<gene>
    <name evidence="19" type="primary">Nos1</name>
</gene>
<organism>
    <name type="scientific">Mus musculus</name>
    <name type="common">Mouse</name>
    <dbReference type="NCBI Taxonomy" id="10090"/>
    <lineage>
        <taxon>Eukaryota</taxon>
        <taxon>Metazoa</taxon>
        <taxon>Chordata</taxon>
        <taxon>Craniata</taxon>
        <taxon>Vertebrata</taxon>
        <taxon>Euteleostomi</taxon>
        <taxon>Mammalia</taxon>
        <taxon>Eutheria</taxon>
        <taxon>Euarchontoglires</taxon>
        <taxon>Glires</taxon>
        <taxon>Rodentia</taxon>
        <taxon>Myomorpha</taxon>
        <taxon>Muroidea</taxon>
        <taxon>Muridae</taxon>
        <taxon>Murinae</taxon>
        <taxon>Mus</taxon>
        <taxon>Mus</taxon>
    </lineage>
</organism>
<feature type="chain" id="PRO_0000170922" description="Nitric oxide synthase 1">
    <location>
        <begin position="1"/>
        <end position="1429"/>
    </location>
</feature>
<feature type="domain" description="PDZ" evidence="5">
    <location>
        <begin position="17"/>
        <end position="99"/>
    </location>
</feature>
<feature type="domain" description="Flavodoxin-like" evidence="4">
    <location>
        <begin position="755"/>
        <end position="935"/>
    </location>
</feature>
<feature type="domain" description="FAD-binding FR-type" evidence="6">
    <location>
        <begin position="990"/>
        <end position="1237"/>
    </location>
</feature>
<feature type="region of interest" description="Interaction with NOSIP" evidence="2">
    <location>
        <begin position="1"/>
        <end position="200"/>
    </location>
</feature>
<feature type="region of interest" description="Disordered" evidence="7">
    <location>
        <begin position="114"/>
        <end position="174"/>
    </location>
</feature>
<feature type="region of interest" description="Interaction with DYNLL1/PIN" evidence="2">
    <location>
        <begin position="163"/>
        <end position="240"/>
    </location>
</feature>
<feature type="region of interest" description="Disordered" evidence="7">
    <location>
        <begin position="271"/>
        <end position="298"/>
    </location>
</feature>
<feature type="region of interest" description="Calmodulin-binding" evidence="15 20">
    <location>
        <begin position="725"/>
        <end position="745"/>
    </location>
</feature>
<feature type="compositionally biased region" description="Polar residues" evidence="7">
    <location>
        <begin position="272"/>
        <end position="294"/>
    </location>
</feature>
<feature type="binding site" evidence="1">
    <location>
        <position position="334"/>
    </location>
    <ligand>
        <name>(6R)-L-erythro-5,6,7,8-tetrahydrobiopterin</name>
        <dbReference type="ChEBI" id="CHEBI:59560"/>
    </ligand>
</feature>
<feature type="binding site" description="axial binding residue" evidence="1">
    <location>
        <position position="415"/>
    </location>
    <ligand>
        <name>heme b</name>
        <dbReference type="ChEBI" id="CHEBI:60344"/>
    </ligand>
    <ligandPart>
        <name>Fe</name>
        <dbReference type="ChEBI" id="CHEBI:18248"/>
    </ligandPart>
</feature>
<feature type="binding site" evidence="1">
    <location>
        <position position="478"/>
    </location>
    <ligand>
        <name>L-arginine</name>
        <dbReference type="ChEBI" id="CHEBI:32682"/>
    </ligand>
</feature>
<feature type="binding site" evidence="1">
    <location>
        <position position="587"/>
    </location>
    <ligand>
        <name>L-arginine</name>
        <dbReference type="ChEBI" id="CHEBI:32682"/>
    </ligand>
</feature>
<feature type="binding site" evidence="1">
    <location>
        <position position="588"/>
    </location>
    <ligand>
        <name>L-arginine</name>
        <dbReference type="ChEBI" id="CHEBI:32682"/>
    </ligand>
</feature>
<feature type="binding site" evidence="1">
    <location>
        <position position="592"/>
    </location>
    <ligand>
        <name>L-arginine</name>
        <dbReference type="ChEBI" id="CHEBI:32682"/>
    </ligand>
</feature>
<feature type="binding site" evidence="1">
    <location>
        <position position="677"/>
    </location>
    <ligand>
        <name>(6R)-L-erythro-5,6,7,8-tetrahydrobiopterin</name>
        <dbReference type="ChEBI" id="CHEBI:59560"/>
    </ligand>
</feature>
<feature type="binding site" evidence="1">
    <location>
        <position position="678"/>
    </location>
    <ligand>
        <name>(6R)-L-erythro-5,6,7,8-tetrahydrobiopterin</name>
        <dbReference type="ChEBI" id="CHEBI:59560"/>
    </ligand>
</feature>
<feature type="binding site" evidence="1">
    <location>
        <position position="691"/>
    </location>
    <ligand>
        <name>(6R)-L-erythro-5,6,7,8-tetrahydrobiopterin</name>
        <dbReference type="ChEBI" id="CHEBI:59560"/>
    </ligand>
</feature>
<feature type="binding site" evidence="1">
    <location>
        <position position="706"/>
    </location>
    <ligand>
        <name>heme b</name>
        <dbReference type="ChEBI" id="CHEBI:60344"/>
    </ligand>
</feature>
<feature type="binding site" evidence="2">
    <location>
        <position position="761"/>
    </location>
    <ligand>
        <name>FMN</name>
        <dbReference type="ChEBI" id="CHEBI:58210"/>
    </ligand>
</feature>
<feature type="binding site" evidence="2">
    <location>
        <position position="762"/>
    </location>
    <ligand>
        <name>FMN</name>
        <dbReference type="ChEBI" id="CHEBI:58210"/>
    </ligand>
</feature>
<feature type="binding site" evidence="2">
    <location>
        <position position="763"/>
    </location>
    <ligand>
        <name>FMN</name>
        <dbReference type="ChEBI" id="CHEBI:58210"/>
    </ligand>
</feature>
<feature type="binding site" evidence="2">
    <location>
        <position position="765"/>
    </location>
    <ligand>
        <name>FMN</name>
        <dbReference type="ChEBI" id="CHEBI:58210"/>
    </ligand>
</feature>
<feature type="binding site" evidence="2">
    <location>
        <position position="766"/>
    </location>
    <ligand>
        <name>FMN</name>
        <dbReference type="ChEBI" id="CHEBI:58210"/>
    </ligand>
</feature>
<feature type="binding site" evidence="2">
    <location>
        <position position="807"/>
    </location>
    <ligand>
        <name>FMN</name>
        <dbReference type="ChEBI" id="CHEBI:58210"/>
    </ligand>
</feature>
<feature type="binding site" evidence="2">
    <location>
        <position position="808"/>
    </location>
    <ligand>
        <name>FMN</name>
        <dbReference type="ChEBI" id="CHEBI:58210"/>
    </ligand>
</feature>
<feature type="binding site" evidence="2">
    <location>
        <position position="812"/>
    </location>
    <ligand>
        <name>FMN</name>
        <dbReference type="ChEBI" id="CHEBI:58210"/>
    </ligand>
</feature>
<feature type="binding site" evidence="2">
    <location>
        <position position="886"/>
    </location>
    <ligand>
        <name>FMN</name>
        <dbReference type="ChEBI" id="CHEBI:58210"/>
    </ligand>
</feature>
<feature type="binding site" evidence="2">
    <location>
        <position position="891"/>
    </location>
    <ligand>
        <name>FMN</name>
        <dbReference type="ChEBI" id="CHEBI:58210"/>
    </ligand>
</feature>
<feature type="binding site" evidence="2">
    <location>
        <position position="893"/>
    </location>
    <ligand>
        <name>FMN</name>
        <dbReference type="ChEBI" id="CHEBI:58210"/>
    </ligand>
</feature>
<feature type="binding site" evidence="2">
    <location>
        <position position="919"/>
    </location>
    <ligand>
        <name>FMN</name>
        <dbReference type="ChEBI" id="CHEBI:58210"/>
    </ligand>
</feature>
<feature type="binding site" evidence="2">
    <location>
        <position position="923"/>
    </location>
    <ligand>
        <name>FMN</name>
        <dbReference type="ChEBI" id="CHEBI:58210"/>
    </ligand>
</feature>
<feature type="binding site" evidence="2">
    <location>
        <position position="1010"/>
    </location>
    <ligand>
        <name>NADP(+)</name>
        <dbReference type="ChEBI" id="CHEBI:58349"/>
    </ligand>
</feature>
<feature type="binding site" evidence="2">
    <location>
        <position position="1032"/>
    </location>
    <ligand>
        <name>FAD</name>
        <dbReference type="ChEBI" id="CHEBI:57692"/>
    </ligand>
</feature>
<feature type="binding site" evidence="2">
    <location>
        <position position="1173"/>
    </location>
    <ligand>
        <name>FAD</name>
        <dbReference type="ChEBI" id="CHEBI:57692"/>
    </ligand>
</feature>
<feature type="binding site" evidence="2">
    <location>
        <position position="1174"/>
    </location>
    <ligand>
        <name>FAD</name>
        <dbReference type="ChEBI" id="CHEBI:57692"/>
    </ligand>
</feature>
<feature type="binding site" evidence="2">
    <location>
        <position position="1175"/>
    </location>
    <ligand>
        <name>FAD</name>
        <dbReference type="ChEBI" id="CHEBI:57692"/>
    </ligand>
</feature>
<feature type="binding site" evidence="2">
    <location>
        <position position="1176"/>
    </location>
    <ligand>
        <name>FAD</name>
        <dbReference type="ChEBI" id="CHEBI:57692"/>
    </ligand>
</feature>
<feature type="binding site" evidence="2">
    <location>
        <position position="1191"/>
    </location>
    <ligand>
        <name>FAD</name>
        <dbReference type="ChEBI" id="CHEBI:57692"/>
    </ligand>
</feature>
<feature type="binding site" evidence="2">
    <location>
        <position position="1193"/>
    </location>
    <ligand>
        <name>FAD</name>
        <dbReference type="ChEBI" id="CHEBI:57692"/>
    </ligand>
</feature>
<feature type="binding site" evidence="2">
    <location>
        <position position="1196"/>
    </location>
    <ligand>
        <name>NADP(+)</name>
        <dbReference type="ChEBI" id="CHEBI:58349"/>
    </ligand>
</feature>
<feature type="binding site" evidence="2">
    <location>
        <position position="1197"/>
    </location>
    <ligand>
        <name>FAD</name>
        <dbReference type="ChEBI" id="CHEBI:57692"/>
    </ligand>
</feature>
<feature type="binding site" evidence="2">
    <location>
        <position position="1210"/>
    </location>
    <ligand>
        <name>FAD</name>
        <dbReference type="ChEBI" id="CHEBI:57692"/>
    </ligand>
</feature>
<feature type="binding site" evidence="2">
    <location>
        <position position="1211"/>
    </location>
    <ligand>
        <name>FAD</name>
        <dbReference type="ChEBI" id="CHEBI:57692"/>
    </ligand>
</feature>
<feature type="binding site" evidence="2">
    <location>
        <position position="1212"/>
    </location>
    <ligand>
        <name>FAD</name>
        <dbReference type="ChEBI" id="CHEBI:57692"/>
    </ligand>
</feature>
<feature type="binding site" evidence="2">
    <location>
        <position position="1251"/>
    </location>
    <ligand>
        <name>NADP(+)</name>
        <dbReference type="ChEBI" id="CHEBI:58349"/>
    </ligand>
</feature>
<feature type="binding site" evidence="2">
    <location>
        <position position="1284"/>
    </location>
    <ligand>
        <name>NADP(+)</name>
        <dbReference type="ChEBI" id="CHEBI:58349"/>
    </ligand>
</feature>
<feature type="binding site" evidence="2">
    <location>
        <position position="1313"/>
    </location>
    <ligand>
        <name>NADP(+)</name>
        <dbReference type="ChEBI" id="CHEBI:58349"/>
    </ligand>
</feature>
<feature type="binding site" evidence="2">
    <location>
        <position position="1314"/>
    </location>
    <ligand>
        <name>NADP(+)</name>
        <dbReference type="ChEBI" id="CHEBI:58349"/>
    </ligand>
</feature>
<feature type="binding site" evidence="2">
    <location>
        <position position="1320"/>
    </location>
    <ligand>
        <name>NADP(+)</name>
        <dbReference type="ChEBI" id="CHEBI:58349"/>
    </ligand>
</feature>
<feature type="binding site" evidence="2">
    <location>
        <position position="1322"/>
    </location>
    <ligand>
        <name>NADP(+)</name>
        <dbReference type="ChEBI" id="CHEBI:58349"/>
    </ligand>
</feature>
<feature type="binding site" evidence="2">
    <location>
        <position position="1324"/>
    </location>
    <ligand>
        <name>NADP(+)</name>
        <dbReference type="ChEBI" id="CHEBI:58349"/>
    </ligand>
</feature>
<feature type="binding site" evidence="2">
    <location>
        <position position="1357"/>
    </location>
    <ligand>
        <name>NADP(+)</name>
        <dbReference type="ChEBI" id="CHEBI:58349"/>
    </ligand>
</feature>
<feature type="binding site" evidence="2">
    <location>
        <position position="1398"/>
    </location>
    <ligand>
        <name>NADP(+)</name>
        <dbReference type="ChEBI" id="CHEBI:58349"/>
    </ligand>
</feature>
<feature type="binding site" evidence="2">
    <location>
        <position position="1400"/>
    </location>
    <ligand>
        <name>NADP(+)</name>
        <dbReference type="ChEBI" id="CHEBI:58349"/>
    </ligand>
</feature>
<feature type="modified residue" description="Phosphoserine" evidence="21">
    <location>
        <position position="280"/>
    </location>
</feature>
<feature type="modified residue" description="Phosphoserine" evidence="2">
    <location>
        <position position="847"/>
    </location>
</feature>
<feature type="modified residue" description="Phosphoserine" evidence="21">
    <location>
        <position position="857"/>
    </location>
</feature>
<feature type="modified residue" description="Phosphoserine" evidence="21">
    <location>
        <position position="858"/>
    </location>
</feature>
<feature type="splice variant" id="VSP_003577" description="In isoform NNOS gamma." evidence="18">
    <location>
        <begin position="1"/>
        <end position="331"/>
    </location>
</feature>
<feature type="splice variant" id="VSP_003575" description="In isoform NNOS beta." evidence="18">
    <location>
        <begin position="1"/>
        <end position="230"/>
    </location>
</feature>
<feature type="splice variant" id="VSP_003576" description="In isoform NNOS beta." evidence="18">
    <original>TGIQVD</original>
    <variation>MRGLGS</variation>
    <location>
        <begin position="231"/>
        <end position="236"/>
    </location>
</feature>
<feature type="splice variant" id="VSP_003578" description="In isoform N-NOS-2." evidence="16">
    <location>
        <begin position="504"/>
        <end position="608"/>
    </location>
</feature>
<feature type="splice variant" id="VSP_003579" description="In isoform NNOS Mu." evidence="17">
    <original>K</original>
    <variation>KYPEPLRFFPRKGPSLSHVDSEAHSLVAARDSQHR</variation>
    <location>
        <position position="839"/>
    </location>
</feature>
<feature type="sequence conflict" description="In Ref. 3; BAE24878." evidence="18" ref="3">
    <original>K</original>
    <variation>Q</variation>
    <location>
        <position position="1320"/>
    </location>
</feature>
<feature type="helix" evidence="22">
    <location>
        <begin position="731"/>
        <end position="744"/>
    </location>
</feature>
<comment type="function">
    <text evidence="11">Produces nitric oxide (NO) which is a messenger molecule with diverse functions throughout the body. In the brain and peripheral nervous system, NO displays many properties of a neurotransmitter. Probably has nitrosylase activity and mediates cysteine S-nitrosylation of cytoplasmic target proteins such SRR. Isoform NNOS Mu may be an effector enzyme for the dystrophin complex.</text>
</comment>
<comment type="catalytic activity">
    <reaction evidence="2">
        <text>2 L-arginine + 3 NADPH + 4 O2 + H(+) = 2 L-citrulline + 2 nitric oxide + 3 NADP(+) + 4 H2O</text>
        <dbReference type="Rhea" id="RHEA:19897"/>
        <dbReference type="ChEBI" id="CHEBI:15377"/>
        <dbReference type="ChEBI" id="CHEBI:15378"/>
        <dbReference type="ChEBI" id="CHEBI:15379"/>
        <dbReference type="ChEBI" id="CHEBI:16480"/>
        <dbReference type="ChEBI" id="CHEBI:32682"/>
        <dbReference type="ChEBI" id="CHEBI:57743"/>
        <dbReference type="ChEBI" id="CHEBI:57783"/>
        <dbReference type="ChEBI" id="CHEBI:58349"/>
        <dbReference type="EC" id="1.14.13.39"/>
    </reaction>
    <physiologicalReaction direction="left-to-right" evidence="2">
        <dbReference type="Rhea" id="RHEA:19898"/>
    </physiologicalReaction>
</comment>
<comment type="cofactor">
    <cofactor evidence="1">
        <name>heme b</name>
        <dbReference type="ChEBI" id="CHEBI:60344"/>
    </cofactor>
</comment>
<comment type="cofactor">
    <cofactor evidence="2">
        <name>FAD</name>
        <dbReference type="ChEBI" id="CHEBI:57692"/>
    </cofactor>
    <text evidence="2">Binds 1 FAD.</text>
</comment>
<comment type="cofactor">
    <cofactor evidence="2">
        <name>FMN</name>
        <dbReference type="ChEBI" id="CHEBI:58210"/>
    </cofactor>
    <text evidence="2">Binds 1 FMN.</text>
</comment>
<comment type="cofactor">
    <cofactor evidence="1">
        <name>(6R)-L-erythro-5,6,7,8-tetrahydrobiopterin</name>
        <dbReference type="ChEBI" id="CHEBI:59560"/>
    </cofactor>
    <text evidence="1">Tetrahydrobiopterin (BH4). May stabilize the dimeric form of the enzyme.</text>
</comment>
<comment type="activity regulation">
    <text evidence="2">Stimulated by calcium/calmodulin. Inhibited by DYNLL1 that prevents the dimerization of the protein. Inhibited by NOSIP.</text>
</comment>
<comment type="subunit">
    <text evidence="2 8 9 10 12 13 14 15">Homodimer. Interacts with DLG4; the interaction possibly being prevented by the association between NOS1 and CAPON (By similarity). Forms a ternary complex with CAPON and RASD1 (PubMed:11086993). Forms a ternary complex with CAPON and SYN1 (By similarity). Interacts with ZDHHC23 (By similarity). Interacts with NOSIP; which may impair its synaptic location (By similarity). Interacts with HTR4 (PubMed:15466885). Interacts with VAC14 (By similarity). Interacts (via N-terminal domain) with DLG4 (via N-terminal tandem pair of PDZ domains) (PubMed:10623522). Interacts with SLC6A4 (PubMed:17452640). Forms a complex with ASL, ASS1 and SLC7A1; the complex regulates cell-autonomous L-arginine synthesis and citrulline recycling while channeling extracellular L-arginine to nitric oxide synthesis pathway (PubMed:22081021). Interacts with DMD; localizes NOS1 to sarcolemma in muscle cells (PubMed:7545544). Interacts with DYNLL1; inhibits the nitric oxide synthase activity (By similarity).</text>
</comment>
<comment type="interaction">
    <interactant intactId="EBI-397596">
        <id>Q9Z0J4</id>
    </interactant>
    <interactant intactId="EBI-298933">
        <id>Q05769</id>
        <label>Ptgs2</label>
    </interactant>
    <organismsDiffer>false</organismsDiffer>
    <experiments>4</experiments>
</comment>
<comment type="interaction">
    <interactant intactId="EBI-397596">
        <id>Q9Z0J4</id>
    </interactant>
    <interactant intactId="EBI-15633326">
        <id>Q60857</id>
        <label>Slc6a4</label>
    </interactant>
    <organismsDiffer>false</organismsDiffer>
    <experiments>4</experiments>
</comment>
<comment type="subcellular location">
    <subcellularLocation>
        <location evidence="14">Cell membrane</location>
        <location evidence="14">Sarcolemma</location>
        <topology evidence="3">Peripheral membrane protein</topology>
    </subcellularLocation>
    <subcellularLocation>
        <location evidence="2">Cell projection</location>
        <location evidence="2">Dendritic spine</location>
    </subcellularLocation>
    <text evidence="2 14">In skeletal muscle, it is localized beneath the sarcolemma of fast-twitch muscle fiber by associating with the dystrophin glycoprotein complex (PubMed:7545544). In neurons, enriched in dendritic spines (By similarity).</text>
</comment>
<comment type="alternative products">
    <event type="alternative splicing"/>
    <isoform>
        <id>Q9Z0J4-1</id>
        <name>N-NOS-1</name>
        <sequence type="displayed"/>
    </isoform>
    <isoform>
        <id>Q9Z0J4-2</id>
        <name>N-NOS-2</name>
        <sequence type="described" ref="VSP_003578"/>
    </isoform>
    <isoform>
        <id>Q9Z0J4-3</id>
        <name>NNOS beta</name>
        <sequence type="described" ref="VSP_003575 VSP_003576"/>
    </isoform>
    <isoform>
        <id>Q9Z0J4-4</id>
        <name>NNOS gamma</name>
        <sequence type="described" ref="VSP_003577"/>
    </isoform>
    <isoform>
        <id>Q9Z0J4-5</id>
        <name>NNOS Mu</name>
        <name>Muscle-specific</name>
        <sequence type="described" ref="VSP_003579"/>
    </isoform>
</comment>
<comment type="tissue specificity">
    <text>Widely expressed in the nervous system: expressed in cerebrum, olfactory bulb, hippocampus, midbrain, cerebellum, pons, medulla oblongata, and spinal cord. Also found in skeletal muscle, where it is localized beneath the sarcolemma of fast twitch muscle fibers, and in spleen, heart, kidney, and liver. N-NOS-1 and N-NOS-2 are found in all parts of the nervous system. NNOS beta and gamma occur in a region-specific manner in the brain and NNOS beta expression is developmentally regulated. NNOS Mu is only found in mature skeletal and cardiac muscles.</text>
</comment>
<comment type="induction">
    <text>By cholinergic agonists acting at inositol phosphate-linked muscarinic receptors in cardiac myocytes.</text>
</comment>
<comment type="domain">
    <text evidence="2">The PDZ domain participates in protein-protein interaction, and is responsible for targeting nNos to synaptic membranes. Mediates interaction with VAC14.</text>
</comment>
<comment type="PTM">
    <text evidence="2">Ubiquitinated; mediated by STUB1/CHIP in the presence of Hsp70 and Hsp40 (in vitro).</text>
</comment>
<comment type="disease">
    <text>In MDX mice (mouse model of dystrophinopathy) the dystrophin complex is disrupted and nNOS is displaced from sarcolemma and accumulates in the cytosol.</text>
</comment>
<comment type="similarity">
    <text evidence="18">Belongs to the NOS family.</text>
</comment>
<name>NOS1_MOUSE</name>
<protein>
    <recommendedName>
        <fullName evidence="19">Nitric oxide synthase 1</fullName>
        <ecNumber evidence="2">1.14.13.39</ecNumber>
    </recommendedName>
    <alternativeName>
        <fullName>Constitutive NOS</fullName>
    </alternativeName>
    <alternativeName>
        <fullName>NC-NOS</fullName>
    </alternativeName>
    <alternativeName>
        <fullName>NOS type I</fullName>
    </alternativeName>
    <alternativeName>
        <fullName>Neuronal NOS</fullName>
        <shortName>N-NOS</shortName>
        <shortName>nNOS</shortName>
    </alternativeName>
    <alternativeName>
        <fullName evidence="18">Nitric oxide synthase, brain</fullName>
        <shortName evidence="18">bNOS</shortName>
    </alternativeName>
    <alternativeName>
        <fullName>Peptidyl-cysteine S-nitrosylase NOS1</fullName>
    </alternativeName>
</protein>
<dbReference type="EC" id="1.14.13.39" evidence="2"/>
<dbReference type="EMBL" id="D14552">
    <property type="protein sequence ID" value="BAA03415.1"/>
    <property type="molecule type" value="mRNA"/>
</dbReference>
<dbReference type="EMBL" id="S81982">
    <property type="protein sequence ID" value="AAB36469.1"/>
    <property type="molecule type" value="mRNA"/>
</dbReference>
<dbReference type="EMBL" id="AK141904">
    <property type="protein sequence ID" value="BAE24878.1"/>
    <property type="molecule type" value="mRNA"/>
</dbReference>
<dbReference type="CCDS" id="CCDS19606.1">
    <molecule id="Q9Z0J4-1"/>
</dbReference>
<dbReference type="PIR" id="JN0609">
    <property type="entry name" value="JN0609"/>
</dbReference>
<dbReference type="RefSeq" id="NP_032738.1">
    <molecule id="Q9Z0J4-1"/>
    <property type="nucleotide sequence ID" value="NM_008712.4"/>
</dbReference>
<dbReference type="RefSeq" id="XP_017176196.1">
    <property type="nucleotide sequence ID" value="XM_017320707.1"/>
</dbReference>
<dbReference type="PDB" id="2O60">
    <property type="method" value="X-ray"/>
    <property type="resolution" value="1.55 A"/>
    <property type="chains" value="B=725-747"/>
</dbReference>
<dbReference type="PDBsum" id="2O60"/>
<dbReference type="BMRB" id="Q9Z0J4"/>
<dbReference type="SMR" id="Q9Z0J4"/>
<dbReference type="BioGRID" id="201805">
    <property type="interactions" value="25"/>
</dbReference>
<dbReference type="CORUM" id="Q9Z0J4"/>
<dbReference type="DIP" id="DIP-31556N"/>
<dbReference type="FunCoup" id="Q9Z0J4">
    <property type="interactions" value="806"/>
</dbReference>
<dbReference type="IntAct" id="Q9Z0J4">
    <property type="interactions" value="11"/>
</dbReference>
<dbReference type="MINT" id="Q9Z0J4"/>
<dbReference type="STRING" id="10090.ENSMUSP00000120421"/>
<dbReference type="BindingDB" id="Q9Z0J4"/>
<dbReference type="ChEMBL" id="CHEMBL4719"/>
<dbReference type="GlyGen" id="Q9Z0J4">
    <property type="glycosylation" value="3 sites, 3 N-linked glycans (3 sites)"/>
</dbReference>
<dbReference type="iPTMnet" id="Q9Z0J4"/>
<dbReference type="PhosphoSitePlus" id="Q9Z0J4"/>
<dbReference type="jPOST" id="Q9Z0J4"/>
<dbReference type="PaxDb" id="10090-ENSMUSP00000099617"/>
<dbReference type="PeptideAtlas" id="Q9Z0J4"/>
<dbReference type="ProteomicsDB" id="295504">
    <molecule id="Q9Z0J4-1"/>
</dbReference>
<dbReference type="ProteomicsDB" id="295505">
    <molecule id="Q9Z0J4-2"/>
</dbReference>
<dbReference type="ProteomicsDB" id="295506">
    <molecule id="Q9Z0J4-3"/>
</dbReference>
<dbReference type="ProteomicsDB" id="295507">
    <molecule id="Q9Z0J4-4"/>
</dbReference>
<dbReference type="ProteomicsDB" id="295508">
    <molecule id="Q9Z0J4-5"/>
</dbReference>
<dbReference type="ABCD" id="Q9Z0J4">
    <property type="antibodies" value="2 sequenced antibodies"/>
</dbReference>
<dbReference type="Antibodypedia" id="3691">
    <property type="antibodies" value="945 antibodies from 47 providers"/>
</dbReference>
<dbReference type="DNASU" id="18125"/>
<dbReference type="Ensembl" id="ENSMUST00000142742.9">
    <molecule id="Q9Z0J4-1"/>
    <property type="protein sequence ID" value="ENSMUSP00000120421.2"/>
    <property type="gene ID" value="ENSMUSG00000029361.19"/>
</dbReference>
<dbReference type="Ensembl" id="ENSMUST00000171055.2">
    <molecule id="Q9Z0J4-1"/>
    <property type="protein sequence ID" value="ENSMUSP00000127432.2"/>
    <property type="gene ID" value="ENSMUSG00000029361.19"/>
</dbReference>
<dbReference type="GeneID" id="18125"/>
<dbReference type="KEGG" id="mmu:18125"/>
<dbReference type="UCSC" id="uc008zfy.2">
    <molecule id="Q9Z0J4-1"/>
    <property type="organism name" value="mouse"/>
</dbReference>
<dbReference type="AGR" id="MGI:97360"/>
<dbReference type="CTD" id="4842"/>
<dbReference type="MGI" id="MGI:97360">
    <property type="gene designation" value="Nos1"/>
</dbReference>
<dbReference type="VEuPathDB" id="HostDB:ENSMUSG00000029361"/>
<dbReference type="eggNOG" id="KOG1158">
    <property type="taxonomic scope" value="Eukaryota"/>
</dbReference>
<dbReference type="GeneTree" id="ENSGT00940000159357"/>
<dbReference type="InParanoid" id="Q9Z0J4"/>
<dbReference type="OrthoDB" id="14703at9989"/>
<dbReference type="PhylomeDB" id="Q9Z0J4"/>
<dbReference type="Reactome" id="R-MMU-1222556">
    <property type="pathway name" value="ROS and RNS production in phagocytes"/>
</dbReference>
<dbReference type="Reactome" id="R-MMU-392154">
    <property type="pathway name" value="Nitric oxide stimulates guanylate cyclase"/>
</dbReference>
<dbReference type="Reactome" id="R-MMU-5578775">
    <property type="pathway name" value="Ion homeostasis"/>
</dbReference>
<dbReference type="BioGRID-ORCS" id="18125">
    <property type="hits" value="0 hits in 75 CRISPR screens"/>
</dbReference>
<dbReference type="CD-CODE" id="CE726F99">
    <property type="entry name" value="Postsynaptic density"/>
</dbReference>
<dbReference type="ChiTaRS" id="Nos1">
    <property type="organism name" value="mouse"/>
</dbReference>
<dbReference type="PRO" id="PR:Q9Z0J4"/>
<dbReference type="Proteomes" id="UP000000589">
    <property type="component" value="Chromosome 5"/>
</dbReference>
<dbReference type="RNAct" id="Q9Z0J4">
    <property type="molecule type" value="protein"/>
</dbReference>
<dbReference type="Bgee" id="ENSMUSG00000029361">
    <property type="expression patterns" value="Expressed in anterior amygdaloid area and 137 other cell types or tissues"/>
</dbReference>
<dbReference type="ExpressionAtlas" id="Q9Z0J4">
    <property type="expression patterns" value="baseline and differential"/>
</dbReference>
<dbReference type="GO" id="GO:0044305">
    <property type="term" value="C:calyx of Held"/>
    <property type="evidence" value="ECO:0000314"/>
    <property type="project" value="SynGO"/>
</dbReference>
<dbReference type="GO" id="GO:0005856">
    <property type="term" value="C:cytoskeleton"/>
    <property type="evidence" value="ECO:0000314"/>
    <property type="project" value="BHF-UCL"/>
</dbReference>
<dbReference type="GO" id="GO:0043197">
    <property type="term" value="C:dendritic spine"/>
    <property type="evidence" value="ECO:0007669"/>
    <property type="project" value="UniProtKB-SubCell"/>
</dbReference>
<dbReference type="GO" id="GO:0045121">
    <property type="term" value="C:membrane raft"/>
    <property type="evidence" value="ECO:0000314"/>
    <property type="project" value="MGI"/>
</dbReference>
<dbReference type="GO" id="GO:0005739">
    <property type="term" value="C:mitochondrion"/>
    <property type="evidence" value="ECO:0000314"/>
    <property type="project" value="BHF-UCL"/>
</dbReference>
<dbReference type="GO" id="GO:0005654">
    <property type="term" value="C:nucleoplasm"/>
    <property type="evidence" value="ECO:0007669"/>
    <property type="project" value="Ensembl"/>
</dbReference>
<dbReference type="GO" id="GO:0042383">
    <property type="term" value="C:sarcolemma"/>
    <property type="evidence" value="ECO:0000314"/>
    <property type="project" value="BHF-UCL"/>
</dbReference>
<dbReference type="GO" id="GO:0033017">
    <property type="term" value="C:sarcoplasmic reticulum membrane"/>
    <property type="evidence" value="ECO:0000314"/>
    <property type="project" value="BHF-UCL"/>
</dbReference>
<dbReference type="GO" id="GO:0045202">
    <property type="term" value="C:synapse"/>
    <property type="evidence" value="ECO:0000314"/>
    <property type="project" value="MGI"/>
</dbReference>
<dbReference type="GO" id="GO:0030315">
    <property type="term" value="C:T-tubule"/>
    <property type="evidence" value="ECO:0000314"/>
    <property type="project" value="BHF-UCL"/>
</dbReference>
<dbReference type="GO" id="GO:0030018">
    <property type="term" value="C:Z disc"/>
    <property type="evidence" value="ECO:0000314"/>
    <property type="project" value="BHF-UCL"/>
</dbReference>
<dbReference type="GO" id="GO:0005516">
    <property type="term" value="F:calmodulin binding"/>
    <property type="evidence" value="ECO:0007669"/>
    <property type="project" value="UniProtKB-KW"/>
</dbReference>
<dbReference type="GO" id="GO:0050660">
    <property type="term" value="F:flavin adenine dinucleotide binding"/>
    <property type="evidence" value="ECO:0007669"/>
    <property type="project" value="InterPro"/>
</dbReference>
<dbReference type="GO" id="GO:0010181">
    <property type="term" value="F:FMN binding"/>
    <property type="evidence" value="ECO:0007669"/>
    <property type="project" value="InterPro"/>
</dbReference>
<dbReference type="GO" id="GO:0020037">
    <property type="term" value="F:heme binding"/>
    <property type="evidence" value="ECO:0007669"/>
    <property type="project" value="InterPro"/>
</dbReference>
<dbReference type="GO" id="GO:0046872">
    <property type="term" value="F:metal ion binding"/>
    <property type="evidence" value="ECO:0007669"/>
    <property type="project" value="UniProtKB-KW"/>
</dbReference>
<dbReference type="GO" id="GO:0050661">
    <property type="term" value="F:NADP binding"/>
    <property type="evidence" value="ECO:0007669"/>
    <property type="project" value="InterPro"/>
</dbReference>
<dbReference type="GO" id="GO:0004517">
    <property type="term" value="F:nitric-oxide synthase activity"/>
    <property type="evidence" value="ECO:0000314"/>
    <property type="project" value="BHF-UCL"/>
</dbReference>
<dbReference type="GO" id="GO:0035605">
    <property type="term" value="F:peptidyl-cysteine S-nitrosylase activity"/>
    <property type="evidence" value="ECO:0007669"/>
    <property type="project" value="Ensembl"/>
</dbReference>
<dbReference type="GO" id="GO:0006816">
    <property type="term" value="P:calcium ion transport"/>
    <property type="evidence" value="ECO:0000315"/>
    <property type="project" value="MGI"/>
</dbReference>
<dbReference type="GO" id="GO:0071363">
    <property type="term" value="P:cellular response to growth factor stimulus"/>
    <property type="evidence" value="ECO:0000315"/>
    <property type="project" value="BHF-UCL"/>
</dbReference>
<dbReference type="GO" id="GO:0051649">
    <property type="term" value="P:establishment of localization in cell"/>
    <property type="evidence" value="ECO:0000315"/>
    <property type="project" value="MGI"/>
</dbReference>
<dbReference type="GO" id="GO:0033555">
    <property type="term" value="P:multicellular organismal response to stress"/>
    <property type="evidence" value="ECO:0007669"/>
    <property type="project" value="Ensembl"/>
</dbReference>
<dbReference type="GO" id="GO:0051926">
    <property type="term" value="P:negative regulation of calcium ion transport"/>
    <property type="evidence" value="ECO:0000315"/>
    <property type="project" value="MGI"/>
</dbReference>
<dbReference type="GO" id="GO:0043267">
    <property type="term" value="P:negative regulation of potassium ion transport"/>
    <property type="evidence" value="ECO:0000315"/>
    <property type="project" value="MGI"/>
</dbReference>
<dbReference type="GO" id="GO:0051612">
    <property type="term" value="P:negative regulation of serotonin uptake"/>
    <property type="evidence" value="ECO:0000314"/>
    <property type="project" value="UniProtKB"/>
</dbReference>
<dbReference type="GO" id="GO:0006809">
    <property type="term" value="P:nitric oxide biosynthetic process"/>
    <property type="evidence" value="ECO:0000314"/>
    <property type="project" value="BHF-UCL"/>
</dbReference>
<dbReference type="GO" id="GO:0106071">
    <property type="term" value="P:positive regulation of adenylate cyclase-activating G protein-coupled receptor signaling pathway"/>
    <property type="evidence" value="ECO:0000315"/>
    <property type="project" value="BHF-UCL"/>
</dbReference>
<dbReference type="GO" id="GO:0045893">
    <property type="term" value="P:positive regulation of DNA-templated transcription"/>
    <property type="evidence" value="ECO:0000315"/>
    <property type="project" value="BHF-UCL"/>
</dbReference>
<dbReference type="GO" id="GO:0043525">
    <property type="term" value="P:positive regulation of neuron apoptotic process"/>
    <property type="evidence" value="ECO:0007669"/>
    <property type="project" value="Ensembl"/>
</dbReference>
<dbReference type="GO" id="GO:0098735">
    <property type="term" value="P:positive regulation of the force of heart contraction"/>
    <property type="evidence" value="ECO:0000315"/>
    <property type="project" value="BHF-UCL"/>
</dbReference>
<dbReference type="GO" id="GO:0045944">
    <property type="term" value="P:positive regulation of transcription by RNA polymerase II"/>
    <property type="evidence" value="ECO:0000315"/>
    <property type="project" value="MGI"/>
</dbReference>
<dbReference type="GO" id="GO:0006813">
    <property type="term" value="P:potassium ion transport"/>
    <property type="evidence" value="ECO:0000315"/>
    <property type="project" value="MGI"/>
</dbReference>
<dbReference type="GO" id="GO:0050767">
    <property type="term" value="P:regulation of neurogenesis"/>
    <property type="evidence" value="ECO:0000314"/>
    <property type="project" value="CACAO"/>
</dbReference>
<dbReference type="GO" id="GO:0060078">
    <property type="term" value="P:regulation of postsynaptic membrane potential"/>
    <property type="evidence" value="ECO:0000314"/>
    <property type="project" value="SynGO"/>
</dbReference>
<dbReference type="GO" id="GO:0002028">
    <property type="term" value="P:regulation of sodium ion transport"/>
    <property type="evidence" value="ECO:0000315"/>
    <property type="project" value="MGI"/>
</dbReference>
<dbReference type="GO" id="GO:0009408">
    <property type="term" value="P:response to heat"/>
    <property type="evidence" value="ECO:0007669"/>
    <property type="project" value="Ensembl"/>
</dbReference>
<dbReference type="GO" id="GO:0001666">
    <property type="term" value="P:response to hypoxia"/>
    <property type="evidence" value="ECO:0007669"/>
    <property type="project" value="Ensembl"/>
</dbReference>
<dbReference type="GO" id="GO:0006941">
    <property type="term" value="P:striated muscle contraction"/>
    <property type="evidence" value="ECO:0000315"/>
    <property type="project" value="MGI"/>
</dbReference>
<dbReference type="GO" id="GO:0099163">
    <property type="term" value="P:synaptic signaling by nitric oxide"/>
    <property type="evidence" value="ECO:0000314"/>
    <property type="project" value="SynGO"/>
</dbReference>
<dbReference type="GO" id="GO:0042311">
    <property type="term" value="P:vasodilation"/>
    <property type="evidence" value="ECO:0007669"/>
    <property type="project" value="Ensembl"/>
</dbReference>
<dbReference type="GO" id="GO:0042178">
    <property type="term" value="P:xenobiotic catabolic process"/>
    <property type="evidence" value="ECO:0000315"/>
    <property type="project" value="MGI"/>
</dbReference>
<dbReference type="CDD" id="cd06202">
    <property type="entry name" value="Nitric_oxide_synthase"/>
    <property type="match status" value="1"/>
</dbReference>
<dbReference type="CDD" id="cd00795">
    <property type="entry name" value="NOS_oxygenase_euk"/>
    <property type="match status" value="1"/>
</dbReference>
<dbReference type="CDD" id="cd06708">
    <property type="entry name" value="PDZ_nNOS-like"/>
    <property type="match status" value="1"/>
</dbReference>
<dbReference type="FunFam" id="3.90.440.10:FF:000001">
    <property type="entry name" value="Endothelial nitric oxide synthase"/>
    <property type="match status" value="1"/>
</dbReference>
<dbReference type="FunFam" id="1.20.990.10:FF:000002">
    <property type="entry name" value="Nitric oxide synthase"/>
    <property type="match status" value="1"/>
</dbReference>
<dbReference type="FunFam" id="2.30.42.10:FF:000069">
    <property type="entry name" value="Nitric oxide synthase"/>
    <property type="match status" value="1"/>
</dbReference>
<dbReference type="FunFam" id="3.40.50.360:FF:000003">
    <property type="entry name" value="Nitric oxide synthase"/>
    <property type="match status" value="1"/>
</dbReference>
<dbReference type="FunFam" id="3.40.50.80:FF:000003">
    <property type="entry name" value="Nitric oxide synthase"/>
    <property type="match status" value="1"/>
</dbReference>
<dbReference type="FunFam" id="3.90.1230.10:FF:000001">
    <property type="entry name" value="Nitric oxide synthase, brain"/>
    <property type="match status" value="1"/>
</dbReference>
<dbReference type="Gene3D" id="2.30.42.10">
    <property type="match status" value="1"/>
</dbReference>
<dbReference type="Gene3D" id="3.40.50.360">
    <property type="match status" value="1"/>
</dbReference>
<dbReference type="Gene3D" id="1.20.990.10">
    <property type="entry name" value="NADPH-cytochrome p450 Reductase, Chain A, domain 3"/>
    <property type="match status" value="1"/>
</dbReference>
<dbReference type="Gene3D" id="3.90.340.10">
    <property type="entry name" value="Nitric Oxide Synthase, Chain A, domain 1"/>
    <property type="match status" value="1"/>
</dbReference>
<dbReference type="Gene3D" id="3.90.1230.10">
    <property type="entry name" value="Nitric Oxide Synthase, Chain A, domain 3"/>
    <property type="match status" value="1"/>
</dbReference>
<dbReference type="Gene3D" id="3.90.440.10">
    <property type="entry name" value="Nitric Oxide Synthase,Heme Domain,Chain A domain 2"/>
    <property type="match status" value="1"/>
</dbReference>
<dbReference type="Gene3D" id="3.40.50.80">
    <property type="entry name" value="Nucleotide-binding domain of ferredoxin-NADP reductase (FNR) module"/>
    <property type="match status" value="1"/>
</dbReference>
<dbReference type="Gene3D" id="2.40.30.10">
    <property type="entry name" value="Translation factors"/>
    <property type="match status" value="1"/>
</dbReference>
<dbReference type="InterPro" id="IPR003097">
    <property type="entry name" value="CysJ-like_FAD-binding"/>
</dbReference>
<dbReference type="InterPro" id="IPR017927">
    <property type="entry name" value="FAD-bd_FR_type"/>
</dbReference>
<dbReference type="InterPro" id="IPR001094">
    <property type="entry name" value="Flavdoxin-like"/>
</dbReference>
<dbReference type="InterPro" id="IPR008254">
    <property type="entry name" value="Flavodoxin/NO_synth"/>
</dbReference>
<dbReference type="InterPro" id="IPR001709">
    <property type="entry name" value="Flavoprot_Pyr_Nucl_cyt_Rdtase"/>
</dbReference>
<dbReference type="InterPro" id="IPR029039">
    <property type="entry name" value="Flavoprotein-like_sf"/>
</dbReference>
<dbReference type="InterPro" id="IPR039261">
    <property type="entry name" value="FNR_nucleotide-bd"/>
</dbReference>
<dbReference type="InterPro" id="IPR023173">
    <property type="entry name" value="NADPH_Cyt_P450_Rdtase_alpha"/>
</dbReference>
<dbReference type="InterPro" id="IPR050607">
    <property type="entry name" value="NOS"/>
</dbReference>
<dbReference type="InterPro" id="IPR044943">
    <property type="entry name" value="NOS_dom_1"/>
</dbReference>
<dbReference type="InterPro" id="IPR044940">
    <property type="entry name" value="NOS_dom_2"/>
</dbReference>
<dbReference type="InterPro" id="IPR044944">
    <property type="entry name" value="NOS_dom_3"/>
</dbReference>
<dbReference type="InterPro" id="IPR012144">
    <property type="entry name" value="NOS_euk"/>
</dbReference>
<dbReference type="InterPro" id="IPR004030">
    <property type="entry name" value="NOS_N"/>
</dbReference>
<dbReference type="InterPro" id="IPR036119">
    <property type="entry name" value="NOS_N_sf"/>
</dbReference>
<dbReference type="InterPro" id="IPR001433">
    <property type="entry name" value="OxRdtase_FAD/NAD-bd"/>
</dbReference>
<dbReference type="InterPro" id="IPR001478">
    <property type="entry name" value="PDZ"/>
</dbReference>
<dbReference type="InterPro" id="IPR036034">
    <property type="entry name" value="PDZ_sf"/>
</dbReference>
<dbReference type="InterPro" id="IPR017938">
    <property type="entry name" value="Riboflavin_synthase-like_b-brl"/>
</dbReference>
<dbReference type="PANTHER" id="PTHR43410:SF2">
    <property type="entry name" value="NITRIC OXIDE SYNTHASE"/>
    <property type="match status" value="1"/>
</dbReference>
<dbReference type="PANTHER" id="PTHR43410">
    <property type="entry name" value="NITRIC OXIDE SYNTHASE OXYGENASE"/>
    <property type="match status" value="1"/>
</dbReference>
<dbReference type="Pfam" id="PF00667">
    <property type="entry name" value="FAD_binding_1"/>
    <property type="match status" value="1"/>
</dbReference>
<dbReference type="Pfam" id="PF00258">
    <property type="entry name" value="Flavodoxin_1"/>
    <property type="match status" value="1"/>
</dbReference>
<dbReference type="Pfam" id="PF00175">
    <property type="entry name" value="NAD_binding_1"/>
    <property type="match status" value="1"/>
</dbReference>
<dbReference type="Pfam" id="PF02898">
    <property type="entry name" value="NO_synthase"/>
    <property type="match status" value="1"/>
</dbReference>
<dbReference type="Pfam" id="PF00595">
    <property type="entry name" value="PDZ"/>
    <property type="match status" value="1"/>
</dbReference>
<dbReference type="PIRSF" id="PIRSF000333">
    <property type="entry name" value="NOS"/>
    <property type="match status" value="1"/>
</dbReference>
<dbReference type="PRINTS" id="PR00369">
    <property type="entry name" value="FLAVODOXIN"/>
</dbReference>
<dbReference type="PRINTS" id="PR00371">
    <property type="entry name" value="FPNCR"/>
</dbReference>
<dbReference type="SMART" id="SM00228">
    <property type="entry name" value="PDZ"/>
    <property type="match status" value="1"/>
</dbReference>
<dbReference type="SUPFAM" id="SSF52343">
    <property type="entry name" value="Ferredoxin reductase-like, C-terminal NADP-linked domain"/>
    <property type="match status" value="1"/>
</dbReference>
<dbReference type="SUPFAM" id="SSF52218">
    <property type="entry name" value="Flavoproteins"/>
    <property type="match status" value="1"/>
</dbReference>
<dbReference type="SUPFAM" id="SSF56512">
    <property type="entry name" value="Nitric oxide (NO) synthase oxygenase domain"/>
    <property type="match status" value="1"/>
</dbReference>
<dbReference type="SUPFAM" id="SSF50156">
    <property type="entry name" value="PDZ domain-like"/>
    <property type="match status" value="1"/>
</dbReference>
<dbReference type="SUPFAM" id="SSF63380">
    <property type="entry name" value="Riboflavin synthase domain-like"/>
    <property type="match status" value="1"/>
</dbReference>
<dbReference type="PROSITE" id="PS51384">
    <property type="entry name" value="FAD_FR"/>
    <property type="match status" value="1"/>
</dbReference>
<dbReference type="PROSITE" id="PS50902">
    <property type="entry name" value="FLAVODOXIN_LIKE"/>
    <property type="match status" value="1"/>
</dbReference>
<dbReference type="PROSITE" id="PS60001">
    <property type="entry name" value="NOS"/>
    <property type="match status" value="1"/>
</dbReference>
<dbReference type="PROSITE" id="PS50106">
    <property type="entry name" value="PDZ"/>
    <property type="match status" value="1"/>
</dbReference>
<sequence>MEEHTFGVQQIQPNVISVRLFKRKVGGLGFLVKERVSKPPVIISDLIRGGAAEQSGLIQAGDIILAVNDRPLVDLSYDSALEVLRGIASETHVVLILRGPEGFTTHLETTFTGDGTPKTIRVTQPLGTPTKAVDLSRQPSASKDQPLAVDRVPGPSNGPQHAQGRGQGAGSVSQANGVAIDPTMKNTKANLQDSGEQDELLKEIEPVLSILTGGGKAVNRGGPAKAEMKDTGIQVDRDLDGKLHKAPPLGGENDRVFNDLWGKGNVPVVLNNPYSENEQSPASGKQSPTKNGSPSRCPRFLKVKNWETDVVLTDTLHLKSTLETGCTEQICMGSIMLPSHHIRKSEDVRTKDQLFPLAKEFLDQYYSSIKRFGSKAHMDRLEEVNKEIESTSTYQLKDTELIYGAKHAWRNASRCVGRIQWSKLQVFDARDCTTAHGMFNYICNHVKYATNKGNLRSAITIFPQRTDGKHDFRVWNSQLIRYAGYKQPDGSTLGDPANVEFTEICIQQGWKPPRGRFDVLPLLLQANGNDPELFQIPPELVLEVPIRHPKFDWFKDLGLKWYGLPAVSNMLLEIGGLEFSACPFSGWYMGTEIGVRDYCDNSRYNILEEVAKKMDLDMRKTSSLWKDQALVEINIAVLYSFQSDKVTIVDHHSATESFIKHMENEYRCRGGCPADWVWIVPPMSGSITPVFHQEMLNYRLTPSFEYQPDPWNTHVWKGTNGTPTKRRAIGFKKLAEAVKFSAKLMGQAMAKRVKATILYATETGKSQAYAKTLCEIFKHAFDAKAMSMEEYDIVHLEHEALVLVVTSTFGNGDPPENGEKFGCALMEMRHPNSVQEERKSYKVRFNSVSSYSDSRKSSGDGPDLRDNFESTGPLANVRFSVFGLGSRAYPHFCAFGHAVDTLLEELGGERILKMREGDELCGQEEAFRTWAKKVFKAACDVFCVGDDVNIEKANNSLISNDRSWKRNKFRLTYVAEAPELTQGLSNVHKKRVSAARLLSRQNLQSPKSSRSTIFVRLHTNGNQELQYQPGDHLGVFPGNHEDLVNALIERLEDAPPANHVVKVEMLEERNTALGVISNWKDESRLPPCTIFQAFKYYLDITTPPTPLQLQQFASLATNEKEKQRLLVLSKGLQEYEEWKWGKNPTMVEVLEEFPSIQMPATLLLTQLSLLQPRYYSISSSPDMYPDEVHLTVAIVSYHTRDGEGPVHHGVCSSWLNRIQADDVVPCFVRGAPSFHLPRNPQVPCILVGPGTGIAPFRSFWQQRQFDIQHKGMNPCPMVLVFGCRQSKIDHIYREETLQAKNKGVFRELYTAYSREPDRPKKYVQDVLQEQLAESVYRALKEQGGHIYVCGDVTMAADVLKAIQRIMTQQGKLSEEDAGVFISRLRDDNRYHEDIFGVTLRTYEVTNRLRSESIAFIEESKKDTDEVFSS</sequence>
<evidence type="ECO:0000250" key="1">
    <source>
        <dbReference type="UniProtKB" id="P29475"/>
    </source>
</evidence>
<evidence type="ECO:0000250" key="2">
    <source>
        <dbReference type="UniProtKB" id="P29476"/>
    </source>
</evidence>
<evidence type="ECO:0000255" key="3"/>
<evidence type="ECO:0000255" key="4">
    <source>
        <dbReference type="PROSITE-ProRule" id="PRU00088"/>
    </source>
</evidence>
<evidence type="ECO:0000255" key="5">
    <source>
        <dbReference type="PROSITE-ProRule" id="PRU00143"/>
    </source>
</evidence>
<evidence type="ECO:0000255" key="6">
    <source>
        <dbReference type="PROSITE-ProRule" id="PRU00716"/>
    </source>
</evidence>
<evidence type="ECO:0000256" key="7">
    <source>
        <dbReference type="SAM" id="MobiDB-lite"/>
    </source>
</evidence>
<evidence type="ECO:0000269" key="8">
    <source>
    </source>
</evidence>
<evidence type="ECO:0000269" key="9">
    <source>
    </source>
</evidence>
<evidence type="ECO:0000269" key="10">
    <source>
    </source>
</evidence>
<evidence type="ECO:0000269" key="11">
    <source>
    </source>
</evidence>
<evidence type="ECO:0000269" key="12">
    <source>
    </source>
</evidence>
<evidence type="ECO:0000269" key="13">
    <source>
    </source>
</evidence>
<evidence type="ECO:0000269" key="14">
    <source>
    </source>
</evidence>
<evidence type="ECO:0000269" key="15">
    <source ref="13"/>
</evidence>
<evidence type="ECO:0000303" key="16">
    <source>
    </source>
</evidence>
<evidence type="ECO:0000303" key="17">
    <source>
    </source>
</evidence>
<evidence type="ECO:0000305" key="18"/>
<evidence type="ECO:0000312" key="19">
    <source>
        <dbReference type="MGI" id="MGI:97360"/>
    </source>
</evidence>
<evidence type="ECO:0007744" key="20">
    <source>
        <dbReference type="PDB" id="2O60"/>
    </source>
</evidence>
<evidence type="ECO:0007744" key="21">
    <source>
    </source>
</evidence>
<evidence type="ECO:0007829" key="22">
    <source>
        <dbReference type="PDB" id="2O60"/>
    </source>
</evidence>
<accession>Q9Z0J4</accession>
<accession>Q3UR10</accession>
<accession>Q64208</accession>
<keyword id="KW-0002">3D-structure</keyword>
<keyword id="KW-0025">Alternative splicing</keyword>
<keyword id="KW-0112">Calmodulin-binding</keyword>
<keyword id="KW-1003">Cell membrane</keyword>
<keyword id="KW-0966">Cell projection</keyword>
<keyword id="KW-0274">FAD</keyword>
<keyword id="KW-0285">Flavoprotein</keyword>
<keyword id="KW-0288">FMN</keyword>
<keyword id="KW-0349">Heme</keyword>
<keyword id="KW-0408">Iron</keyword>
<keyword id="KW-0472">Membrane</keyword>
<keyword id="KW-0479">Metal-binding</keyword>
<keyword id="KW-0521">NADP</keyword>
<keyword id="KW-0560">Oxidoreductase</keyword>
<keyword id="KW-0597">Phosphoprotein</keyword>
<keyword id="KW-1185">Reference proteome</keyword>
<keyword id="KW-0770">Synapse</keyword>
<keyword id="KW-0832">Ubl conjugation</keyword>
<reference key="1">
    <citation type="journal article" date="1993" name="Biochem. Biophys. Res. Commun.">
        <title>Structural diversity of neuronal oxide synthase mRNA in the nervous system.</title>
        <authorList>
            <person name="Ogura T."/>
            <person name="Yokoyama T."/>
            <person name="Fujisawa H."/>
            <person name="Kurashima Y."/>
            <person name="Esumi H."/>
        </authorList>
    </citation>
    <scope>NUCLEOTIDE SEQUENCE [MRNA] (ISOFORMS N-NOS-1 AND N-NOS-2)</scope>
    <source>
        <strain>BALB/cJ</strain>
        <tissue>Brain</tissue>
    </source>
</reference>
<reference key="2">
    <citation type="journal article" date="1996" name="J. Biol. Chem.">
        <title>Neuronal nitric-oxide synthase-mu, an alternatively spliced isoform expressed in differentiated skeletal muscle.</title>
        <authorList>
            <person name="Silvagno F."/>
            <person name="Xia H."/>
            <person name="Bredt D.S."/>
        </authorList>
    </citation>
    <scope>NUCLEOTIDE SEQUENCE [MRNA] (ISOFORM NNOS MU)</scope>
    <source>
        <tissue>Skeletal muscle</tissue>
    </source>
</reference>
<reference key="3">
    <citation type="journal article" date="2005" name="Science">
        <title>The transcriptional landscape of the mammalian genome.</title>
        <authorList>
            <person name="Carninci P."/>
            <person name="Kasukawa T."/>
            <person name="Katayama S."/>
            <person name="Gough J."/>
            <person name="Frith M.C."/>
            <person name="Maeda N."/>
            <person name="Oyama R."/>
            <person name="Ravasi T."/>
            <person name="Lenhard B."/>
            <person name="Wells C."/>
            <person name="Kodzius R."/>
            <person name="Shimokawa K."/>
            <person name="Bajic V.B."/>
            <person name="Brenner S.E."/>
            <person name="Batalov S."/>
            <person name="Forrest A.R."/>
            <person name="Zavolan M."/>
            <person name="Davis M.J."/>
            <person name="Wilming L.G."/>
            <person name="Aidinis V."/>
            <person name="Allen J.E."/>
            <person name="Ambesi-Impiombato A."/>
            <person name="Apweiler R."/>
            <person name="Aturaliya R.N."/>
            <person name="Bailey T.L."/>
            <person name="Bansal M."/>
            <person name="Baxter L."/>
            <person name="Beisel K.W."/>
            <person name="Bersano T."/>
            <person name="Bono H."/>
            <person name="Chalk A.M."/>
            <person name="Chiu K.P."/>
            <person name="Choudhary V."/>
            <person name="Christoffels A."/>
            <person name="Clutterbuck D.R."/>
            <person name="Crowe M.L."/>
            <person name="Dalla E."/>
            <person name="Dalrymple B.P."/>
            <person name="de Bono B."/>
            <person name="Della Gatta G."/>
            <person name="di Bernardo D."/>
            <person name="Down T."/>
            <person name="Engstrom P."/>
            <person name="Fagiolini M."/>
            <person name="Faulkner G."/>
            <person name="Fletcher C.F."/>
            <person name="Fukushima T."/>
            <person name="Furuno M."/>
            <person name="Futaki S."/>
            <person name="Gariboldi M."/>
            <person name="Georgii-Hemming P."/>
            <person name="Gingeras T.R."/>
            <person name="Gojobori T."/>
            <person name="Green R.E."/>
            <person name="Gustincich S."/>
            <person name="Harbers M."/>
            <person name="Hayashi Y."/>
            <person name="Hensch T.K."/>
            <person name="Hirokawa N."/>
            <person name="Hill D."/>
            <person name="Huminiecki L."/>
            <person name="Iacono M."/>
            <person name="Ikeo K."/>
            <person name="Iwama A."/>
            <person name="Ishikawa T."/>
            <person name="Jakt M."/>
            <person name="Kanapin A."/>
            <person name="Katoh M."/>
            <person name="Kawasawa Y."/>
            <person name="Kelso J."/>
            <person name="Kitamura H."/>
            <person name="Kitano H."/>
            <person name="Kollias G."/>
            <person name="Krishnan S.P."/>
            <person name="Kruger A."/>
            <person name="Kummerfeld S.K."/>
            <person name="Kurochkin I.V."/>
            <person name="Lareau L.F."/>
            <person name="Lazarevic D."/>
            <person name="Lipovich L."/>
            <person name="Liu J."/>
            <person name="Liuni S."/>
            <person name="McWilliam S."/>
            <person name="Madan Babu M."/>
            <person name="Madera M."/>
            <person name="Marchionni L."/>
            <person name="Matsuda H."/>
            <person name="Matsuzawa S."/>
            <person name="Miki H."/>
            <person name="Mignone F."/>
            <person name="Miyake S."/>
            <person name="Morris K."/>
            <person name="Mottagui-Tabar S."/>
            <person name="Mulder N."/>
            <person name="Nakano N."/>
            <person name="Nakauchi H."/>
            <person name="Ng P."/>
            <person name="Nilsson R."/>
            <person name="Nishiguchi S."/>
            <person name="Nishikawa S."/>
            <person name="Nori F."/>
            <person name="Ohara O."/>
            <person name="Okazaki Y."/>
            <person name="Orlando V."/>
            <person name="Pang K.C."/>
            <person name="Pavan W.J."/>
            <person name="Pavesi G."/>
            <person name="Pesole G."/>
            <person name="Petrovsky N."/>
            <person name="Piazza S."/>
            <person name="Reed J."/>
            <person name="Reid J.F."/>
            <person name="Ring B.Z."/>
            <person name="Ringwald M."/>
            <person name="Rost B."/>
            <person name="Ruan Y."/>
            <person name="Salzberg S.L."/>
            <person name="Sandelin A."/>
            <person name="Schneider C."/>
            <person name="Schoenbach C."/>
            <person name="Sekiguchi K."/>
            <person name="Semple C.A."/>
            <person name="Seno S."/>
            <person name="Sessa L."/>
            <person name="Sheng Y."/>
            <person name="Shibata Y."/>
            <person name="Shimada H."/>
            <person name="Shimada K."/>
            <person name="Silva D."/>
            <person name="Sinclair B."/>
            <person name="Sperling S."/>
            <person name="Stupka E."/>
            <person name="Sugiura K."/>
            <person name="Sultana R."/>
            <person name="Takenaka Y."/>
            <person name="Taki K."/>
            <person name="Tammoja K."/>
            <person name="Tan S.L."/>
            <person name="Tang S."/>
            <person name="Taylor M.S."/>
            <person name="Tegner J."/>
            <person name="Teichmann S.A."/>
            <person name="Ueda H.R."/>
            <person name="van Nimwegen E."/>
            <person name="Verardo R."/>
            <person name="Wei C.L."/>
            <person name="Yagi K."/>
            <person name="Yamanishi H."/>
            <person name="Zabarovsky E."/>
            <person name="Zhu S."/>
            <person name="Zimmer A."/>
            <person name="Hide W."/>
            <person name="Bult C."/>
            <person name="Grimmond S.M."/>
            <person name="Teasdale R.D."/>
            <person name="Liu E.T."/>
            <person name="Brusic V."/>
            <person name="Quackenbush J."/>
            <person name="Wahlestedt C."/>
            <person name="Mattick J.S."/>
            <person name="Hume D.A."/>
            <person name="Kai C."/>
            <person name="Sasaki D."/>
            <person name="Tomaru Y."/>
            <person name="Fukuda S."/>
            <person name="Kanamori-Katayama M."/>
            <person name="Suzuki M."/>
            <person name="Aoki J."/>
            <person name="Arakawa T."/>
            <person name="Iida J."/>
            <person name="Imamura K."/>
            <person name="Itoh M."/>
            <person name="Kato T."/>
            <person name="Kawaji H."/>
            <person name="Kawagashira N."/>
            <person name="Kawashima T."/>
            <person name="Kojima M."/>
            <person name="Kondo S."/>
            <person name="Konno H."/>
            <person name="Nakano K."/>
            <person name="Ninomiya N."/>
            <person name="Nishio T."/>
            <person name="Okada M."/>
            <person name="Plessy C."/>
            <person name="Shibata K."/>
            <person name="Shiraki T."/>
            <person name="Suzuki S."/>
            <person name="Tagami M."/>
            <person name="Waki K."/>
            <person name="Watahiki A."/>
            <person name="Okamura-Oho Y."/>
            <person name="Suzuki H."/>
            <person name="Kawai J."/>
            <person name="Hayashizaki Y."/>
        </authorList>
    </citation>
    <scope>NUCLEOTIDE SEQUENCE [LARGE SCALE MRNA] OF 1320-1429</scope>
    <source>
        <strain>C57BL/6J</strain>
        <tissue>Spinal ganglion</tissue>
    </source>
</reference>
<reference key="4">
    <citation type="journal article" date="1995" name="Cell">
        <title>Nitric oxide synthase complexed with dystrophin and absent from skeletal muscle sarcolemma in Duchenne muscular dystrophy.</title>
        <authorList>
            <person name="Brenman J.E."/>
            <person name="Chao D.S."/>
            <person name="Xia H."/>
            <person name="Aldape K."/>
            <person name="Bredt D.S."/>
        </authorList>
    </citation>
    <scope>SUBCELLULAR LOCATION</scope>
    <scope>INTERACTION WITH DMD</scope>
</reference>
<reference key="5">
    <citation type="journal article" date="1997" name="Dev. Neurosci.">
        <title>Regulation of neuronal nitric oxide synthase through alternative transcripts.</title>
        <authorList>
            <person name="Brenman J.E."/>
            <person name="Xia H."/>
            <person name="Chao D.S."/>
            <person name="Black S.M."/>
            <person name="Bredt D.S."/>
        </authorList>
    </citation>
    <scope>ALTERNATIVE SPLICING (ISOFORMS NNOS BETA; NNOS GAMMA AND NNOS MU)</scope>
</reference>
<reference key="6">
    <citation type="journal article" date="2000" name="J. Mol. Biol.">
        <title>Solution structure and backbone dynamics of the second PDZ domain of postsynaptic density-95.</title>
        <authorList>
            <person name="Tochio H."/>
            <person name="Hung F."/>
            <person name="Li M."/>
            <person name="Bredt D.S."/>
            <person name="Zhang M."/>
        </authorList>
    </citation>
    <scope>INTERACTION WITH DLG4</scope>
</reference>
<reference key="7">
    <citation type="journal article" date="2000" name="Neuron">
        <title>Dexras1: a G protein specifically coupled to neuronal nitric oxide synthase via CAPON.</title>
        <authorList>
            <person name="Fang M."/>
            <person name="Jaffrey S.R."/>
            <person name="Sawa A."/>
            <person name="Ye K."/>
            <person name="Luo X."/>
            <person name="Snyder S.H."/>
        </authorList>
    </citation>
    <scope>INTERACTION WITH RASD1 AND CAPON</scope>
</reference>
<reference key="8">
    <citation type="journal article" date="2004" name="J. Cell Sci.">
        <title>New sorting nexin (SNX27) and NHERF specifically interact with the 5-HT4a receptor splice variant: roles in receptor targeting.</title>
        <authorList>
            <person name="Joubert L."/>
            <person name="Hanson B."/>
            <person name="Barthet G."/>
            <person name="Sebben M."/>
            <person name="Claeysen S."/>
            <person name="Hong W."/>
            <person name="Marin P."/>
            <person name="Dumuis A."/>
            <person name="Bockaert J."/>
        </authorList>
    </citation>
    <scope>INTERACTION WITH HTR4</scope>
</reference>
<reference key="9">
    <citation type="journal article" date="2007" name="Proc. Natl. Acad. Sci. U.S.A.">
        <title>Nitric oxide S-nitrosylates serine racemase, mediating feedback inhibition of D-serine formation.</title>
        <authorList>
            <person name="Mustafa A.K."/>
            <person name="Kumar M."/>
            <person name="Selvakumar B."/>
            <person name="Ho G.P."/>
            <person name="Ehmsen J.T."/>
            <person name="Barrow R.K."/>
            <person name="Amzel L.M."/>
            <person name="Snyder S.H."/>
        </authorList>
    </citation>
    <scope>FUNCTION AS NITROSYLASE</scope>
</reference>
<reference key="10">
    <citation type="journal article" date="2007" name="Proc. Natl. Acad. Sci. U.S.A.">
        <title>Physical interaction between the serotonin transporter and neuronal nitric oxide synthase underlies reciprocal modulation of their activity.</title>
        <authorList>
            <person name="Chanrion B."/>
            <person name="Mannoury la Cour C."/>
            <person name="Bertaso F."/>
            <person name="Lerner-Natoli M."/>
            <person name="Freissmuth M."/>
            <person name="Millan M.J."/>
            <person name="Bockaert J."/>
            <person name="Marin P."/>
        </authorList>
    </citation>
    <scope>INTERACTION WITH SLC6A4</scope>
</reference>
<reference key="11">
    <citation type="journal article" date="2010" name="Cell">
        <title>A tissue-specific atlas of mouse protein phosphorylation and expression.</title>
        <authorList>
            <person name="Huttlin E.L."/>
            <person name="Jedrychowski M.P."/>
            <person name="Elias J.E."/>
            <person name="Goswami T."/>
            <person name="Rad R."/>
            <person name="Beausoleil S.A."/>
            <person name="Villen J."/>
            <person name="Haas W."/>
            <person name="Sowa M.E."/>
            <person name="Gygi S.P."/>
        </authorList>
    </citation>
    <scope>PHOSPHORYLATION [LARGE SCALE ANALYSIS] AT SER-280; SER-857 AND SER-858</scope>
    <scope>IDENTIFICATION BY MASS SPECTROMETRY [LARGE SCALE ANALYSIS]</scope>
    <source>
        <tissue>Brain</tissue>
    </source>
</reference>
<reference key="12">
    <citation type="journal article" date="2011" name="Nat. Med.">
        <title>Requirement of argininosuccinate lyase for systemic nitric oxide production.</title>
        <authorList>
            <person name="Erez A."/>
            <person name="Nagamani S.C."/>
            <person name="Shchelochkov O.A."/>
            <person name="Premkumar M.H."/>
            <person name="Campeau P.M."/>
            <person name="Chen Y."/>
            <person name="Garg H.K."/>
            <person name="Li L."/>
            <person name="Mian A."/>
            <person name="Bertin T.K."/>
            <person name="Black J.O."/>
            <person name="Zeng H."/>
            <person name="Tang Y."/>
            <person name="Reddy A.K."/>
            <person name="Summar M."/>
            <person name="O'Brien W.E."/>
            <person name="Harrison D.G."/>
            <person name="Mitch W.E."/>
            <person name="Marini J.C."/>
            <person name="Aschner J.L."/>
            <person name="Bryan N.S."/>
            <person name="Lee B."/>
        </authorList>
    </citation>
    <scope>INTERACTION WITH ASL; ASS1 AND SLC7A1</scope>
</reference>
<reference evidence="20" key="13">
    <citation type="submission" date="2006-12" db="PDB data bank">
        <title>Crystal structure of calmodulin-neuronal nitric oxide synthase complex.</title>
        <authorList>
            <person name="Valentine K.G."/>
            <person name="Ng H.L."/>
            <person name="Schneeweis L."/>
            <person name="Kranz J.K."/>
            <person name="Frederick K.K."/>
            <person name="Alber T."/>
            <person name="Wand A.J."/>
        </authorList>
    </citation>
    <scope>X-RAY CRYSTALLOGRAPHY (1.55 ANGSTROMS) OF 725-747 IN COMPLEX WITH CALMODULIN</scope>
    <scope>REGION</scope>
</reference>
<proteinExistence type="evidence at protein level"/>